<organism>
    <name type="scientific">Paraburkholderia xenovorans (strain LB400)</name>
    <dbReference type="NCBI Taxonomy" id="266265"/>
    <lineage>
        <taxon>Bacteria</taxon>
        <taxon>Pseudomonadati</taxon>
        <taxon>Pseudomonadota</taxon>
        <taxon>Betaproteobacteria</taxon>
        <taxon>Burkholderiales</taxon>
        <taxon>Burkholderiaceae</taxon>
        <taxon>Paraburkholderia</taxon>
    </lineage>
</organism>
<keyword id="KW-0067">ATP-binding</keyword>
<keyword id="KW-0963">Cytoplasm</keyword>
<keyword id="KW-0436">Ligase</keyword>
<keyword id="KW-0547">Nucleotide-binding</keyword>
<keyword id="KW-0658">Purine biosynthesis</keyword>
<keyword id="KW-1185">Reference proteome</keyword>
<evidence type="ECO:0000255" key="1">
    <source>
        <dbReference type="HAMAP-Rule" id="MF_00741"/>
    </source>
</evidence>
<feature type="chain" id="PRO_0000258344" description="Phosphoribosylformylglycinamidine cyclo-ligase">
    <location>
        <begin position="1"/>
        <end position="355"/>
    </location>
</feature>
<sequence>MNQPKSAPNSTDSAQGLSYRDAGVDIDAGDALVDAIKPFARKTMRDGVLGGIGGFGALFEVPKKYKEPVLVSGTDGVGTKLRLAFQLNKHDTVGQDLVAMSVNDILVQGAEPLFFLDYFACGKLDVGTAATVVKGIAYGCELSGCALIGGETAEMPGMYPDGEYDLAGFAVGAVEKSKIIDGSTIAPGDVVLGLASSGIHSNGFSLVRKIIERAQPDLNADFDGRSLADALMAPTHIYVKPLLALMQQIAVKGMAHITGGGLVENIPRVLREGLTAELDHRGWPLPPLFSWLQKHGGVADAEMHRVFNCGIGMAVVVSAADADAAIGLLSAAGEQVWKIGVIRESAAGEAQTVVI</sequence>
<accession>Q145C6</accession>
<protein>
    <recommendedName>
        <fullName evidence="1">Phosphoribosylformylglycinamidine cyclo-ligase</fullName>
        <ecNumber evidence="1">6.3.3.1</ecNumber>
    </recommendedName>
    <alternativeName>
        <fullName evidence="1">AIR synthase</fullName>
    </alternativeName>
    <alternativeName>
        <fullName evidence="1">AIRS</fullName>
    </alternativeName>
    <alternativeName>
        <fullName evidence="1">Phosphoribosyl-aminoimidazole synthetase</fullName>
    </alternativeName>
</protein>
<dbReference type="EC" id="6.3.3.1" evidence="1"/>
<dbReference type="EMBL" id="CP000270">
    <property type="protein sequence ID" value="ABE29063.1"/>
    <property type="molecule type" value="Genomic_DNA"/>
</dbReference>
<dbReference type="RefSeq" id="WP_011486883.1">
    <property type="nucleotide sequence ID" value="NC_007951.1"/>
</dbReference>
<dbReference type="SMR" id="Q145C6"/>
<dbReference type="STRING" id="266265.Bxe_A3936"/>
<dbReference type="KEGG" id="bxb:DR64_1613"/>
<dbReference type="KEGG" id="bxe:Bxe_A3936"/>
<dbReference type="PATRIC" id="fig|266265.5.peg.547"/>
<dbReference type="eggNOG" id="COG0150">
    <property type="taxonomic scope" value="Bacteria"/>
</dbReference>
<dbReference type="OrthoDB" id="9777881at2"/>
<dbReference type="UniPathway" id="UPA00074">
    <property type="reaction ID" value="UER00129"/>
</dbReference>
<dbReference type="Proteomes" id="UP000001817">
    <property type="component" value="Chromosome 1"/>
</dbReference>
<dbReference type="GO" id="GO:0005829">
    <property type="term" value="C:cytosol"/>
    <property type="evidence" value="ECO:0007669"/>
    <property type="project" value="TreeGrafter"/>
</dbReference>
<dbReference type="GO" id="GO:0005524">
    <property type="term" value="F:ATP binding"/>
    <property type="evidence" value="ECO:0007669"/>
    <property type="project" value="UniProtKB-KW"/>
</dbReference>
<dbReference type="GO" id="GO:0004637">
    <property type="term" value="F:phosphoribosylamine-glycine ligase activity"/>
    <property type="evidence" value="ECO:0007669"/>
    <property type="project" value="TreeGrafter"/>
</dbReference>
<dbReference type="GO" id="GO:0004641">
    <property type="term" value="F:phosphoribosylformylglycinamidine cyclo-ligase activity"/>
    <property type="evidence" value="ECO:0007669"/>
    <property type="project" value="UniProtKB-UniRule"/>
</dbReference>
<dbReference type="GO" id="GO:0006189">
    <property type="term" value="P:'de novo' IMP biosynthetic process"/>
    <property type="evidence" value="ECO:0007669"/>
    <property type="project" value="UniProtKB-UniRule"/>
</dbReference>
<dbReference type="GO" id="GO:0046084">
    <property type="term" value="P:adenine biosynthetic process"/>
    <property type="evidence" value="ECO:0007669"/>
    <property type="project" value="TreeGrafter"/>
</dbReference>
<dbReference type="CDD" id="cd02196">
    <property type="entry name" value="PurM"/>
    <property type="match status" value="1"/>
</dbReference>
<dbReference type="FunFam" id="3.30.1330.10:FF:000001">
    <property type="entry name" value="Phosphoribosylformylglycinamidine cyclo-ligase"/>
    <property type="match status" value="1"/>
</dbReference>
<dbReference type="FunFam" id="3.90.650.10:FF:000001">
    <property type="entry name" value="Phosphoribosylformylglycinamidine cyclo-ligase"/>
    <property type="match status" value="1"/>
</dbReference>
<dbReference type="Gene3D" id="3.90.650.10">
    <property type="entry name" value="PurM-like C-terminal domain"/>
    <property type="match status" value="1"/>
</dbReference>
<dbReference type="Gene3D" id="3.30.1330.10">
    <property type="entry name" value="PurM-like, N-terminal domain"/>
    <property type="match status" value="1"/>
</dbReference>
<dbReference type="HAMAP" id="MF_00741">
    <property type="entry name" value="AIRS"/>
    <property type="match status" value="1"/>
</dbReference>
<dbReference type="InterPro" id="IPR010918">
    <property type="entry name" value="PurM-like_C_dom"/>
</dbReference>
<dbReference type="InterPro" id="IPR036676">
    <property type="entry name" value="PurM-like_C_sf"/>
</dbReference>
<dbReference type="InterPro" id="IPR016188">
    <property type="entry name" value="PurM-like_N"/>
</dbReference>
<dbReference type="InterPro" id="IPR036921">
    <property type="entry name" value="PurM-like_N_sf"/>
</dbReference>
<dbReference type="InterPro" id="IPR004733">
    <property type="entry name" value="PurM_cligase"/>
</dbReference>
<dbReference type="NCBIfam" id="TIGR00878">
    <property type="entry name" value="purM"/>
    <property type="match status" value="1"/>
</dbReference>
<dbReference type="PANTHER" id="PTHR10520:SF12">
    <property type="entry name" value="TRIFUNCTIONAL PURINE BIOSYNTHETIC PROTEIN ADENOSINE-3"/>
    <property type="match status" value="1"/>
</dbReference>
<dbReference type="PANTHER" id="PTHR10520">
    <property type="entry name" value="TRIFUNCTIONAL PURINE BIOSYNTHETIC PROTEIN ADENOSINE-3-RELATED"/>
    <property type="match status" value="1"/>
</dbReference>
<dbReference type="Pfam" id="PF00586">
    <property type="entry name" value="AIRS"/>
    <property type="match status" value="1"/>
</dbReference>
<dbReference type="Pfam" id="PF02769">
    <property type="entry name" value="AIRS_C"/>
    <property type="match status" value="1"/>
</dbReference>
<dbReference type="SUPFAM" id="SSF56042">
    <property type="entry name" value="PurM C-terminal domain-like"/>
    <property type="match status" value="1"/>
</dbReference>
<dbReference type="SUPFAM" id="SSF55326">
    <property type="entry name" value="PurM N-terminal domain-like"/>
    <property type="match status" value="1"/>
</dbReference>
<comment type="catalytic activity">
    <reaction evidence="1">
        <text>2-formamido-N(1)-(5-O-phospho-beta-D-ribosyl)acetamidine + ATP = 5-amino-1-(5-phospho-beta-D-ribosyl)imidazole + ADP + phosphate + H(+)</text>
        <dbReference type="Rhea" id="RHEA:23032"/>
        <dbReference type="ChEBI" id="CHEBI:15378"/>
        <dbReference type="ChEBI" id="CHEBI:30616"/>
        <dbReference type="ChEBI" id="CHEBI:43474"/>
        <dbReference type="ChEBI" id="CHEBI:137981"/>
        <dbReference type="ChEBI" id="CHEBI:147287"/>
        <dbReference type="ChEBI" id="CHEBI:456216"/>
        <dbReference type="EC" id="6.3.3.1"/>
    </reaction>
</comment>
<comment type="pathway">
    <text evidence="1">Purine metabolism; IMP biosynthesis via de novo pathway; 5-amino-1-(5-phospho-D-ribosyl)imidazole from N(2)-formyl-N(1)-(5-phospho-D-ribosyl)glycinamide: step 2/2.</text>
</comment>
<comment type="subcellular location">
    <subcellularLocation>
        <location evidence="1">Cytoplasm</location>
    </subcellularLocation>
</comment>
<comment type="similarity">
    <text evidence="1">Belongs to the AIR synthase family.</text>
</comment>
<proteinExistence type="inferred from homology"/>
<gene>
    <name evidence="1" type="primary">purM</name>
    <name type="ordered locus">Bxeno_A0525</name>
    <name type="ORF">Bxe_A3936</name>
</gene>
<name>PUR5_PARXL</name>
<reference key="1">
    <citation type="journal article" date="2006" name="Proc. Natl. Acad. Sci. U.S.A.">
        <title>Burkholderia xenovorans LB400 harbors a multi-replicon, 9.73-Mbp genome shaped for versatility.</title>
        <authorList>
            <person name="Chain P.S.G."/>
            <person name="Denef V.J."/>
            <person name="Konstantinidis K.T."/>
            <person name="Vergez L.M."/>
            <person name="Agullo L."/>
            <person name="Reyes V.L."/>
            <person name="Hauser L."/>
            <person name="Cordova M."/>
            <person name="Gomez L."/>
            <person name="Gonzalez M."/>
            <person name="Land M."/>
            <person name="Lao V."/>
            <person name="Larimer F."/>
            <person name="LiPuma J.J."/>
            <person name="Mahenthiralingam E."/>
            <person name="Malfatti S.A."/>
            <person name="Marx C.J."/>
            <person name="Parnell J.J."/>
            <person name="Ramette A."/>
            <person name="Richardson P."/>
            <person name="Seeger M."/>
            <person name="Smith D."/>
            <person name="Spilker T."/>
            <person name="Sul W.J."/>
            <person name="Tsoi T.V."/>
            <person name="Ulrich L.E."/>
            <person name="Zhulin I.B."/>
            <person name="Tiedje J.M."/>
        </authorList>
    </citation>
    <scope>NUCLEOTIDE SEQUENCE [LARGE SCALE GENOMIC DNA]</scope>
    <source>
        <strain>LB400</strain>
    </source>
</reference>